<evidence type="ECO:0000255" key="1">
    <source>
        <dbReference type="HAMAP-Rule" id="MF_00013"/>
    </source>
</evidence>
<evidence type="ECO:0000255" key="2">
    <source>
        <dbReference type="PROSITE-ProRule" id="PRU01067"/>
    </source>
</evidence>
<sequence length="207" mass="22571">MAFLVRMLGRADYEPVWRAMQEFTGQRADDTADELWLVEHPPVYTLGMNGDPAHILDAGGVPVVRTDRGGQVTYHGPGQLVLYTLVDLQRRKLGVRRMVSALEQAVIGLLRQYGLEARARGDAPGVYVDGAKIASLGLRVRRGCCYHGVALNVCPELEAFDRIHPCGHAGLAVTRLTDLGVEAQVFEPAAALVRELMVQLGDEEIAA</sequence>
<gene>
    <name evidence="1" type="primary">lipB</name>
    <name type="ordered locus">MCA0109</name>
</gene>
<name>LIPB_METCA</name>
<feature type="chain" id="PRO_0000062847" description="Octanoyltransferase">
    <location>
        <begin position="1"/>
        <end position="207"/>
    </location>
</feature>
<feature type="domain" description="BPL/LPL catalytic" evidence="2">
    <location>
        <begin position="29"/>
        <end position="204"/>
    </location>
</feature>
<feature type="active site" description="Acyl-thioester intermediate" evidence="1">
    <location>
        <position position="166"/>
    </location>
</feature>
<feature type="binding site" evidence="1">
    <location>
        <begin position="68"/>
        <end position="75"/>
    </location>
    <ligand>
        <name>substrate</name>
    </ligand>
</feature>
<feature type="binding site" evidence="1">
    <location>
        <begin position="135"/>
        <end position="137"/>
    </location>
    <ligand>
        <name>substrate</name>
    </ligand>
</feature>
<feature type="binding site" evidence="1">
    <location>
        <begin position="148"/>
        <end position="150"/>
    </location>
    <ligand>
        <name>substrate</name>
    </ligand>
</feature>
<feature type="site" description="Lowers pKa of active site Cys" evidence="1">
    <location>
        <position position="132"/>
    </location>
</feature>
<accession>Q60CJ7</accession>
<dbReference type="EC" id="2.3.1.181" evidence="1"/>
<dbReference type="EMBL" id="AE017282">
    <property type="protein sequence ID" value="AAU90701.1"/>
    <property type="molecule type" value="Genomic_DNA"/>
</dbReference>
<dbReference type="RefSeq" id="WP_010959479.1">
    <property type="nucleotide sequence ID" value="NC_002977.6"/>
</dbReference>
<dbReference type="SMR" id="Q60CJ7"/>
<dbReference type="STRING" id="243233.MCA0109"/>
<dbReference type="GeneID" id="88222459"/>
<dbReference type="KEGG" id="mca:MCA0109"/>
<dbReference type="eggNOG" id="COG0321">
    <property type="taxonomic scope" value="Bacteria"/>
</dbReference>
<dbReference type="HOGENOM" id="CLU_035168_3_1_6"/>
<dbReference type="UniPathway" id="UPA00538">
    <property type="reaction ID" value="UER00592"/>
</dbReference>
<dbReference type="Proteomes" id="UP000006821">
    <property type="component" value="Chromosome"/>
</dbReference>
<dbReference type="GO" id="GO:0005737">
    <property type="term" value="C:cytoplasm"/>
    <property type="evidence" value="ECO:0007669"/>
    <property type="project" value="UniProtKB-SubCell"/>
</dbReference>
<dbReference type="GO" id="GO:0033819">
    <property type="term" value="F:lipoyl(octanoyl) transferase activity"/>
    <property type="evidence" value="ECO:0007669"/>
    <property type="project" value="UniProtKB-EC"/>
</dbReference>
<dbReference type="GO" id="GO:0036211">
    <property type="term" value="P:protein modification process"/>
    <property type="evidence" value="ECO:0007669"/>
    <property type="project" value="InterPro"/>
</dbReference>
<dbReference type="CDD" id="cd16444">
    <property type="entry name" value="LipB"/>
    <property type="match status" value="1"/>
</dbReference>
<dbReference type="FunFam" id="3.30.930.10:FF:000020">
    <property type="entry name" value="Octanoyltransferase"/>
    <property type="match status" value="1"/>
</dbReference>
<dbReference type="Gene3D" id="3.30.930.10">
    <property type="entry name" value="Bira Bifunctional Protein, Domain 2"/>
    <property type="match status" value="1"/>
</dbReference>
<dbReference type="HAMAP" id="MF_00013">
    <property type="entry name" value="LipB"/>
    <property type="match status" value="1"/>
</dbReference>
<dbReference type="InterPro" id="IPR045864">
    <property type="entry name" value="aa-tRNA-synth_II/BPL/LPL"/>
</dbReference>
<dbReference type="InterPro" id="IPR004143">
    <property type="entry name" value="BPL_LPL_catalytic"/>
</dbReference>
<dbReference type="InterPro" id="IPR000544">
    <property type="entry name" value="Octanoyltransferase"/>
</dbReference>
<dbReference type="InterPro" id="IPR020605">
    <property type="entry name" value="Octanoyltransferase_CS"/>
</dbReference>
<dbReference type="NCBIfam" id="TIGR00214">
    <property type="entry name" value="lipB"/>
    <property type="match status" value="1"/>
</dbReference>
<dbReference type="NCBIfam" id="NF010922">
    <property type="entry name" value="PRK14342.1"/>
    <property type="match status" value="1"/>
</dbReference>
<dbReference type="PANTHER" id="PTHR10993:SF7">
    <property type="entry name" value="LIPOYLTRANSFERASE 2, MITOCHONDRIAL-RELATED"/>
    <property type="match status" value="1"/>
</dbReference>
<dbReference type="PANTHER" id="PTHR10993">
    <property type="entry name" value="OCTANOYLTRANSFERASE"/>
    <property type="match status" value="1"/>
</dbReference>
<dbReference type="Pfam" id="PF21948">
    <property type="entry name" value="LplA-B_cat"/>
    <property type="match status" value="1"/>
</dbReference>
<dbReference type="PIRSF" id="PIRSF016262">
    <property type="entry name" value="LPLase"/>
    <property type="match status" value="1"/>
</dbReference>
<dbReference type="SUPFAM" id="SSF55681">
    <property type="entry name" value="Class II aaRS and biotin synthetases"/>
    <property type="match status" value="1"/>
</dbReference>
<dbReference type="PROSITE" id="PS51733">
    <property type="entry name" value="BPL_LPL_CATALYTIC"/>
    <property type="match status" value="1"/>
</dbReference>
<dbReference type="PROSITE" id="PS01313">
    <property type="entry name" value="LIPB"/>
    <property type="match status" value="1"/>
</dbReference>
<keyword id="KW-0012">Acyltransferase</keyword>
<keyword id="KW-0963">Cytoplasm</keyword>
<keyword id="KW-1185">Reference proteome</keyword>
<keyword id="KW-0808">Transferase</keyword>
<reference key="1">
    <citation type="journal article" date="2004" name="PLoS Biol.">
        <title>Genomic insights into methanotrophy: the complete genome sequence of Methylococcus capsulatus (Bath).</title>
        <authorList>
            <person name="Ward N.L."/>
            <person name="Larsen O."/>
            <person name="Sakwa J."/>
            <person name="Bruseth L."/>
            <person name="Khouri H.M."/>
            <person name="Durkin A.S."/>
            <person name="Dimitrov G."/>
            <person name="Jiang L."/>
            <person name="Scanlan D."/>
            <person name="Kang K.H."/>
            <person name="Lewis M.R."/>
            <person name="Nelson K.E."/>
            <person name="Methe B.A."/>
            <person name="Wu M."/>
            <person name="Heidelberg J.F."/>
            <person name="Paulsen I.T."/>
            <person name="Fouts D.E."/>
            <person name="Ravel J."/>
            <person name="Tettelin H."/>
            <person name="Ren Q."/>
            <person name="Read T.D."/>
            <person name="DeBoy R.T."/>
            <person name="Seshadri R."/>
            <person name="Salzberg S.L."/>
            <person name="Jensen H.B."/>
            <person name="Birkeland N.K."/>
            <person name="Nelson W.C."/>
            <person name="Dodson R.J."/>
            <person name="Grindhaug S.H."/>
            <person name="Holt I.E."/>
            <person name="Eidhammer I."/>
            <person name="Jonasen I."/>
            <person name="Vanaken S."/>
            <person name="Utterback T.R."/>
            <person name="Feldblyum T.V."/>
            <person name="Fraser C.M."/>
            <person name="Lillehaug J.R."/>
            <person name="Eisen J.A."/>
        </authorList>
    </citation>
    <scope>NUCLEOTIDE SEQUENCE [LARGE SCALE GENOMIC DNA]</scope>
    <source>
        <strain>ATCC 33009 / NCIMB 11132 / Bath</strain>
    </source>
</reference>
<proteinExistence type="inferred from homology"/>
<organism>
    <name type="scientific">Methylococcus capsulatus (strain ATCC 33009 / NCIMB 11132 / Bath)</name>
    <dbReference type="NCBI Taxonomy" id="243233"/>
    <lineage>
        <taxon>Bacteria</taxon>
        <taxon>Pseudomonadati</taxon>
        <taxon>Pseudomonadota</taxon>
        <taxon>Gammaproteobacteria</taxon>
        <taxon>Methylococcales</taxon>
        <taxon>Methylococcaceae</taxon>
        <taxon>Methylococcus</taxon>
    </lineage>
</organism>
<comment type="function">
    <text evidence="1">Catalyzes the transfer of endogenously produced octanoic acid from octanoyl-acyl-carrier-protein onto the lipoyl domains of lipoate-dependent enzymes. Lipoyl-ACP can also act as a substrate although octanoyl-ACP is likely to be the physiological substrate.</text>
</comment>
<comment type="catalytic activity">
    <reaction evidence="1">
        <text>octanoyl-[ACP] + L-lysyl-[protein] = N(6)-octanoyl-L-lysyl-[protein] + holo-[ACP] + H(+)</text>
        <dbReference type="Rhea" id="RHEA:17665"/>
        <dbReference type="Rhea" id="RHEA-COMP:9636"/>
        <dbReference type="Rhea" id="RHEA-COMP:9685"/>
        <dbReference type="Rhea" id="RHEA-COMP:9752"/>
        <dbReference type="Rhea" id="RHEA-COMP:9928"/>
        <dbReference type="ChEBI" id="CHEBI:15378"/>
        <dbReference type="ChEBI" id="CHEBI:29969"/>
        <dbReference type="ChEBI" id="CHEBI:64479"/>
        <dbReference type="ChEBI" id="CHEBI:78463"/>
        <dbReference type="ChEBI" id="CHEBI:78809"/>
        <dbReference type="EC" id="2.3.1.181"/>
    </reaction>
</comment>
<comment type="pathway">
    <text evidence="1">Protein modification; protein lipoylation via endogenous pathway; protein N(6)-(lipoyl)lysine from octanoyl-[acyl-carrier-protein]: step 1/2.</text>
</comment>
<comment type="subcellular location">
    <subcellularLocation>
        <location evidence="1">Cytoplasm</location>
    </subcellularLocation>
</comment>
<comment type="miscellaneous">
    <text evidence="1">In the reaction, the free carboxyl group of octanoic acid is attached via an amide linkage to the epsilon-amino group of a specific lysine residue of lipoyl domains of lipoate-dependent enzymes.</text>
</comment>
<comment type="similarity">
    <text evidence="1">Belongs to the LipB family.</text>
</comment>
<protein>
    <recommendedName>
        <fullName evidence="1">Octanoyltransferase</fullName>
        <ecNumber evidence="1">2.3.1.181</ecNumber>
    </recommendedName>
    <alternativeName>
        <fullName evidence="1">Lipoate-protein ligase B</fullName>
    </alternativeName>
    <alternativeName>
        <fullName evidence="1">Lipoyl/octanoyl transferase</fullName>
    </alternativeName>
    <alternativeName>
        <fullName evidence="1">Octanoyl-[acyl-carrier-protein]-protein N-octanoyltransferase</fullName>
    </alternativeName>
</protein>